<comment type="function">
    <text evidence="8 10 11 12">Constant region of T cell receptor (TR) alpha chain (PubMed:24600447). Alpha-beta T cell receptors are antigen specific receptors which are essential to the immune response and are present on the cell surface of T lymphocytes. Recognize peptide-major histocompatibility (MH) (pMH) complexes that are displayed by antigen presenting cells (APC), a prerequisite for efficient T cell adaptive immunity against pathogens (PubMed:25493333). Binding of alpha-beta TR to pMH complex initiates TR-CD3 clustering on the cell surface and intracellular activation of LCK that phosphorylates the ITAM motifs of CD3G, CD3D, CD3E and CD247 enabling the recruitment of ZAP70. In turn, ZAP70 phosphorylates LAT, which recruits numerous signaling molecules to form the LAT signalosome. The LAT signalosome propagates signal branching to three major signaling pathways, the calcium, the mitogen-activated protein kinase (MAPK) kinase and the nuclear factor NF-kappa-B (NF-kB) pathways, leading to the mobilization of transcription factors that are critical for gene expression and essential for T cell growth and differentiation (PubMed:23524462). The T cell repertoire is generated in the thymus, by V-(D)-J rearrangement. This repertoire is then shaped by intrathymic selection events to generate a peripheral T cell pool of self-MH restricted, non-autoaggressive T cells. Post-thymic interaction of alpha-beta TR with the pMH complexes shapes TR structural and functional avidity (PubMed:15040585).</text>
</comment>
<comment type="subunit">
    <text evidence="7 9">Alpha-beta TR is a heterodimer composed of an alpha and beta chain; disulfide-linked. The alpha-beta TR is associated with the transmembrane signaling CD3 coreceptor proteins to form the TR-CD3 (TcR or TCR). The assembly of alpha-beta TR heterodimers with CD3 occurs in the endoplasmic reticulum where a single alpha-beta TR heterodimer associates with one CD3D-CD3E heterodimer, one CD3G-CD3E heterodimer and one CD247 homodimer forming a stable octameric structure. CD3D-CD3E and CD3G-CD3E heterodimers preferentially associate with TR alpha and TR beta chains, respectively. The association of the CD247 homodimer is the last step of TcR assembly in the endoplasmic reticulum and is required for transport to the cell surface.</text>
</comment>
<comment type="subcellular location">
    <subcellularLocation>
        <location evidence="9">Cell membrane</location>
    </subcellularLocation>
</comment>
<comment type="domain">
    <text evidence="15">The connecting peptide (CP) domain contributes to the TR-CD3 assembly and signal transduction.</text>
</comment>
<comment type="domain">
    <text evidence="7">The TM domain mediates the interaction with the CD3 subunits.</text>
</comment>
<comment type="polymorphism">
    <text evidence="14">There are several alleles. The sequence shown is that of IMGT allele TRAC*01.</text>
</comment>
<comment type="disease" evidence="6">
    <disease id="DI-04031">
        <name>Immunodeficiency 7</name>
        <acronym>IMD7</acronym>
        <description>A primary immunodeficiency disorder manifesting with recurrent respiratory infections, candidiasis, diarrhea, and failure to thrive. Patients show a clear predisposition to herpes viral infections, and features of immune dysregulation, including hypereosinophilia, vitiligo, and alopecia areata. Other features include lymphadenopathy and hepatosplenomegaly. CD3+ T-cells express TCR-gamma/delta, but little or no TCR-alpha/beta.</description>
        <dbReference type="MIM" id="615387"/>
    </disease>
    <text>The disease is caused by variants affecting the gene represented in this entry.</text>
</comment>
<comment type="sequence caution" evidence="14">
    <conflict type="miscellaneous discrepancy">
        <sequence resource="EMBL-CDS" id="CAA26435"/>
    </conflict>
    <text>Chimeric mRNA corresponding to regions V, J and C of T cell receptor (TR) alpha chain.</text>
</comment>
<keyword id="KW-0002">3D-structure</keyword>
<keyword id="KW-1064">Adaptive immunity</keyword>
<keyword id="KW-1003">Cell membrane</keyword>
<keyword id="KW-1015">Disulfide bond</keyword>
<keyword id="KW-0325">Glycoprotein</keyword>
<keyword id="KW-0391">Immunity</keyword>
<keyword id="KW-0472">Membrane</keyword>
<keyword id="KW-0675">Receptor</keyword>
<keyword id="KW-1185">Reference proteome</keyword>
<keyword id="KW-1279">T cell receptor</keyword>
<keyword id="KW-0812">Transmembrane</keyword>
<keyword id="KW-1133">Transmembrane helix</keyword>
<proteinExistence type="evidence at protein level"/>
<name>TRAC_HUMAN</name>
<feature type="chain" id="PRO_0000184524" description="T cell receptor alpha chain constant">
    <location>
        <begin position="1" status="less than"/>
        <end position="140"/>
    </location>
</feature>
<feature type="transmembrane region" description="Helical" evidence="1 7">
    <location>
        <begin position="116"/>
        <end position="138"/>
    </location>
</feature>
<feature type="topological domain" description="Cytoplasmic" evidence="1">
    <location>
        <begin position="139"/>
        <end position="140"/>
    </location>
</feature>
<feature type="domain" description="Ig-like C1-type" evidence="2">
    <location>
        <begin position="19"/>
        <end position="107"/>
    </location>
</feature>
<feature type="region of interest" description="Connecting peptide" evidence="15">
    <location>
        <begin position="94"/>
        <end position="115"/>
    </location>
</feature>
<feature type="glycosylation site" description="N-linked (GlcNAc...) asparagine" evidence="3 5">
    <location>
        <position position="32"/>
    </location>
</feature>
<feature type="glycosylation site" description="N-linked (GlcNAc...) asparagine" evidence="3 5">
    <location>
        <position position="66"/>
    </location>
</feature>
<feature type="glycosylation site" description="N-linked (GlcNAc...) asparagine" evidence="3">
    <location>
        <position position="77"/>
    </location>
</feature>
<feature type="glycosylation site" description="N-linked (GlcNAc...) asparagine" evidence="3">
    <location>
        <position position="113"/>
    </location>
</feature>
<feature type="disulfide bond" evidence="4">
    <location>
        <begin position="22"/>
        <end position="72"/>
    </location>
</feature>
<feature type="disulfide bond" description="Interchain (with C-130 in TRBC1 or TRBC2)" evidence="15">
    <location>
        <position position="94"/>
    </location>
</feature>
<feature type="mutagenesis site" description="Impairs TR-CD3 complex assembly." evidence="7">
    <original>N</original>
    <variation>L</variation>
    <variation>F</variation>
    <location>
        <position position="130"/>
    </location>
</feature>
<feature type="non-terminal residue">
    <location>
        <position position="1"/>
    </location>
</feature>
<feature type="strand" evidence="18">
    <location>
        <begin position="7"/>
        <end position="15"/>
    </location>
</feature>
<feature type="strand" evidence="18">
    <location>
        <begin position="20"/>
        <end position="26"/>
    </location>
</feature>
<feature type="strand" evidence="17">
    <location>
        <begin position="29"/>
        <end position="31"/>
    </location>
</feature>
<feature type="strand" evidence="19">
    <location>
        <begin position="37"/>
        <end position="40"/>
    </location>
</feature>
<feature type="strand" evidence="18">
    <location>
        <begin position="41"/>
        <end position="43"/>
    </location>
</feature>
<feature type="strand" evidence="18">
    <location>
        <begin position="47"/>
        <end position="51"/>
    </location>
</feature>
<feature type="helix" evidence="18">
    <location>
        <begin position="52"/>
        <end position="54"/>
    </location>
</feature>
<feature type="strand" evidence="18">
    <location>
        <begin position="56"/>
        <end position="66"/>
    </location>
</feature>
<feature type="strand" evidence="16">
    <location>
        <begin position="67"/>
        <end position="69"/>
    </location>
</feature>
<feature type="helix" evidence="18">
    <location>
        <begin position="72"/>
        <end position="75"/>
    </location>
</feature>
<feature type="turn" evidence="18">
    <location>
        <begin position="76"/>
        <end position="78"/>
    </location>
</feature>
<feature type="helix" evidence="20">
    <location>
        <begin position="99"/>
        <end position="101"/>
    </location>
</feature>
<feature type="helix" evidence="20">
    <location>
        <begin position="107"/>
        <end position="139"/>
    </location>
</feature>
<evidence type="ECO:0000255" key="1"/>
<evidence type="ECO:0000255" key="2">
    <source>
        <dbReference type="PROSITE-ProRule" id="PRU00114"/>
    </source>
</evidence>
<evidence type="ECO:0000255" key="3">
    <source>
        <dbReference type="PROSITE-ProRule" id="PRU00498"/>
    </source>
</evidence>
<evidence type="ECO:0000269" key="4">
    <source>
    </source>
</evidence>
<evidence type="ECO:0000269" key="5">
    <source>
    </source>
</evidence>
<evidence type="ECO:0000269" key="6">
    <source>
    </source>
</evidence>
<evidence type="ECO:0000269" key="7">
    <source>
    </source>
</evidence>
<evidence type="ECO:0000303" key="8">
    <source>
    </source>
</evidence>
<evidence type="ECO:0000303" key="9">
    <source>
    </source>
</evidence>
<evidence type="ECO:0000303" key="10">
    <source>
    </source>
</evidence>
<evidence type="ECO:0000303" key="11">
    <source>
    </source>
</evidence>
<evidence type="ECO:0000303" key="12">
    <source>
    </source>
</evidence>
<evidence type="ECO:0000303" key="13">
    <source ref="4"/>
</evidence>
<evidence type="ECO:0000305" key="14"/>
<evidence type="ECO:0000305" key="15">
    <source>
    </source>
</evidence>
<evidence type="ECO:0007829" key="16">
    <source>
        <dbReference type="PDB" id="2BNU"/>
    </source>
</evidence>
<evidence type="ECO:0007829" key="17">
    <source>
        <dbReference type="PDB" id="4N0C"/>
    </source>
</evidence>
<evidence type="ECO:0007829" key="18">
    <source>
        <dbReference type="PDB" id="4UDT"/>
    </source>
</evidence>
<evidence type="ECO:0007829" key="19">
    <source>
        <dbReference type="PDB" id="5C0C"/>
    </source>
</evidence>
<evidence type="ECO:0007829" key="20">
    <source>
        <dbReference type="PDB" id="7FJE"/>
    </source>
</evidence>
<accession>P01848</accession>
<accession>A0A087WWC6</accession>
<dbReference type="EMBL" id="X02592">
    <property type="protein sequence ID" value="CAA26435.1"/>
    <property type="status" value="ALT_SEQ"/>
    <property type="molecule type" value="mRNA"/>
</dbReference>
<dbReference type="EMBL" id="AC243965">
    <property type="status" value="NOT_ANNOTATED_CDS"/>
    <property type="molecule type" value="Genomic_DNA"/>
</dbReference>
<dbReference type="PIR" id="S18893">
    <property type="entry name" value="RWHUAC"/>
</dbReference>
<dbReference type="PDB" id="1AO7">
    <property type="method" value="X-ray"/>
    <property type="resolution" value="2.60 A"/>
    <property type="chains" value="D=1-93"/>
</dbReference>
<dbReference type="PDB" id="1BD2">
    <property type="method" value="X-ray"/>
    <property type="resolution" value="2.50 A"/>
    <property type="chains" value="D=1-93"/>
</dbReference>
<dbReference type="PDB" id="1FYT">
    <property type="method" value="X-ray"/>
    <property type="resolution" value="2.60 A"/>
    <property type="chains" value="D=1-97"/>
</dbReference>
<dbReference type="PDB" id="1J8H">
    <property type="method" value="X-ray"/>
    <property type="resolution" value="2.40 A"/>
    <property type="chains" value="D=1-97"/>
</dbReference>
<dbReference type="PDB" id="1KGC">
    <property type="method" value="X-ray"/>
    <property type="resolution" value="1.50 A"/>
    <property type="chains" value="D=1-93"/>
</dbReference>
<dbReference type="PDB" id="1MI5">
    <property type="method" value="X-ray"/>
    <property type="resolution" value="2.50 A"/>
    <property type="chains" value="D=1-89"/>
</dbReference>
<dbReference type="PDB" id="1OGA">
    <property type="method" value="X-ray"/>
    <property type="resolution" value="1.40 A"/>
    <property type="chains" value="D=1-95"/>
</dbReference>
<dbReference type="PDB" id="1QRN">
    <property type="method" value="X-ray"/>
    <property type="resolution" value="2.80 A"/>
    <property type="chains" value="D=1-89"/>
</dbReference>
<dbReference type="PDB" id="1QSF">
    <property type="method" value="X-ray"/>
    <property type="resolution" value="2.80 A"/>
    <property type="chains" value="D=1-89"/>
</dbReference>
<dbReference type="PDB" id="1YMM">
    <property type="method" value="X-ray"/>
    <property type="resolution" value="3.50 A"/>
    <property type="chains" value="D=1-94"/>
</dbReference>
<dbReference type="PDB" id="1ZGL">
    <property type="method" value="X-ray"/>
    <property type="resolution" value="2.80 A"/>
    <property type="chains" value="M/Q/S/U=1-94"/>
</dbReference>
<dbReference type="PDB" id="2AK4">
    <property type="method" value="X-ray"/>
    <property type="resolution" value="2.50 A"/>
    <property type="chains" value="D/I/N/T=1-93"/>
</dbReference>
<dbReference type="PDB" id="2BNQ">
    <property type="method" value="X-ray"/>
    <property type="resolution" value="1.70 A"/>
    <property type="chains" value="D=1-89"/>
</dbReference>
<dbReference type="PDB" id="2BNR">
    <property type="method" value="X-ray"/>
    <property type="resolution" value="1.90 A"/>
    <property type="chains" value="D=1-89"/>
</dbReference>
<dbReference type="PDB" id="2BNU">
    <property type="method" value="X-ray"/>
    <property type="resolution" value="1.40 A"/>
    <property type="chains" value="A=1-89"/>
</dbReference>
<dbReference type="PDB" id="2CDF">
    <property type="method" value="X-ray"/>
    <property type="resolution" value="2.25 A"/>
    <property type="chains" value="A=1-78"/>
</dbReference>
<dbReference type="PDB" id="2CDG">
    <property type="method" value="X-ray"/>
    <property type="resolution" value="2.60 A"/>
    <property type="chains" value="A=1-78"/>
</dbReference>
<dbReference type="PDB" id="2ESV">
    <property type="method" value="X-ray"/>
    <property type="resolution" value="2.60 A"/>
    <property type="chains" value="D=1-89"/>
</dbReference>
<dbReference type="PDB" id="2EYR">
    <property type="method" value="X-ray"/>
    <property type="resolution" value="2.40 A"/>
    <property type="chains" value="A=1-93"/>
</dbReference>
<dbReference type="PDB" id="2EYS">
    <property type="method" value="X-ray"/>
    <property type="resolution" value="2.21 A"/>
    <property type="chains" value="A=1-93"/>
</dbReference>
<dbReference type="PDB" id="2EYT">
    <property type="method" value="X-ray"/>
    <property type="resolution" value="2.60 A"/>
    <property type="chains" value="A/C=1-93"/>
</dbReference>
<dbReference type="PDB" id="2F53">
    <property type="method" value="X-ray"/>
    <property type="resolution" value="2.10 A"/>
    <property type="chains" value="D=1-77"/>
</dbReference>
<dbReference type="PDB" id="2F54">
    <property type="method" value="X-ray"/>
    <property type="resolution" value="2.70 A"/>
    <property type="chains" value="D/K=1-91"/>
</dbReference>
<dbReference type="PDB" id="2GJ6">
    <property type="method" value="X-ray"/>
    <property type="resolution" value="2.56 A"/>
    <property type="chains" value="D=1-89"/>
</dbReference>
<dbReference type="PDB" id="2IAL">
    <property type="method" value="X-ray"/>
    <property type="resolution" value="1.92 A"/>
    <property type="chains" value="A/C=1-93"/>
</dbReference>
<dbReference type="PDB" id="2IAM">
    <property type="method" value="X-ray"/>
    <property type="resolution" value="2.80 A"/>
    <property type="chains" value="C=1-93"/>
</dbReference>
<dbReference type="PDB" id="2IAN">
    <property type="method" value="X-ray"/>
    <property type="resolution" value="2.80 A"/>
    <property type="chains" value="D/I/N/S=1-93"/>
</dbReference>
<dbReference type="PDB" id="2NX5">
    <property type="method" value="X-ray"/>
    <property type="resolution" value="2.70 A"/>
    <property type="chains" value="D/I/N/T=1-77"/>
</dbReference>
<dbReference type="PDB" id="2P5E">
    <property type="method" value="X-ray"/>
    <property type="resolution" value="1.89 A"/>
    <property type="chains" value="D=1-79"/>
</dbReference>
<dbReference type="PDB" id="2P5W">
    <property type="method" value="X-ray"/>
    <property type="resolution" value="2.20 A"/>
    <property type="chains" value="D=1-77"/>
</dbReference>
<dbReference type="PDB" id="2PO6">
    <property type="method" value="X-ray"/>
    <property type="resolution" value="3.20 A"/>
    <property type="chains" value="C/G=1-90"/>
</dbReference>
<dbReference type="PDB" id="2PYE">
    <property type="method" value="X-ray"/>
    <property type="resolution" value="2.30 A"/>
    <property type="chains" value="D=1-79"/>
</dbReference>
<dbReference type="PDB" id="2PYF">
    <property type="method" value="X-ray"/>
    <property type="resolution" value="2.20 A"/>
    <property type="chains" value="A=1-91"/>
</dbReference>
<dbReference type="PDB" id="2VLJ">
    <property type="method" value="X-ray"/>
    <property type="resolution" value="2.40 A"/>
    <property type="chains" value="D=1-89"/>
</dbReference>
<dbReference type="PDB" id="2VLK">
    <property type="method" value="X-ray"/>
    <property type="resolution" value="2.50 A"/>
    <property type="chains" value="D=1-89"/>
</dbReference>
<dbReference type="PDB" id="2VLM">
    <property type="method" value="X-ray"/>
    <property type="resolution" value="1.98 A"/>
    <property type="chains" value="D=1-89"/>
</dbReference>
<dbReference type="PDB" id="2VLR">
    <property type="method" value="X-ray"/>
    <property type="resolution" value="2.30 A"/>
    <property type="chains" value="D/I=1-89"/>
</dbReference>
<dbReference type="PDB" id="2XN9">
    <property type="method" value="X-ray"/>
    <property type="resolution" value="2.30 A"/>
    <property type="chains" value="A=1-93"/>
</dbReference>
<dbReference type="PDB" id="2XNA">
    <property type="method" value="X-ray"/>
    <property type="resolution" value="2.10 A"/>
    <property type="chains" value="A=1-93"/>
</dbReference>
<dbReference type="PDB" id="3ARB">
    <property type="method" value="X-ray"/>
    <property type="resolution" value="2.70 A"/>
    <property type="chains" value="C=1-93"/>
</dbReference>
<dbReference type="PDB" id="3ARD">
    <property type="method" value="X-ray"/>
    <property type="resolution" value="3.01 A"/>
    <property type="chains" value="C=1-93"/>
</dbReference>
<dbReference type="PDB" id="3ARE">
    <property type="method" value="X-ray"/>
    <property type="resolution" value="2.80 A"/>
    <property type="chains" value="C=1-93"/>
</dbReference>
<dbReference type="PDB" id="3ARF">
    <property type="method" value="X-ray"/>
    <property type="resolution" value="2.90 A"/>
    <property type="chains" value="C=1-93"/>
</dbReference>
<dbReference type="PDB" id="3ARG">
    <property type="method" value="X-ray"/>
    <property type="resolution" value="3.00 A"/>
    <property type="chains" value="C=1-93"/>
</dbReference>
<dbReference type="PDB" id="3D39">
    <property type="method" value="X-ray"/>
    <property type="resolution" value="2.81 A"/>
    <property type="chains" value="D=1-89"/>
</dbReference>
<dbReference type="PDB" id="3DX9">
    <property type="method" value="X-ray"/>
    <property type="resolution" value="2.75 A"/>
    <property type="chains" value="A/C=1-90"/>
</dbReference>
<dbReference type="PDB" id="3DXA">
    <property type="method" value="X-ray"/>
    <property type="resolution" value="3.50 A"/>
    <property type="chains" value="D/I/N=1-91"/>
</dbReference>
<dbReference type="PDB" id="3FFC">
    <property type="method" value="X-ray"/>
    <property type="resolution" value="2.80 A"/>
    <property type="chains" value="D/I=1-89"/>
</dbReference>
<dbReference type="PDB" id="3GSN">
    <property type="method" value="X-ray"/>
    <property type="resolution" value="2.80 A"/>
    <property type="chains" value="A=1-89"/>
</dbReference>
<dbReference type="PDB" id="3HE7">
    <property type="method" value="X-ray"/>
    <property type="resolution" value="2.80 A"/>
    <property type="chains" value="C=1-93"/>
</dbReference>
<dbReference type="PDB" id="3HG1">
    <property type="method" value="X-ray"/>
    <property type="resolution" value="3.00 A"/>
    <property type="chains" value="D=1-85"/>
</dbReference>
<dbReference type="PDB" id="3KPR">
    <property type="method" value="X-ray"/>
    <property type="resolution" value="2.60 A"/>
    <property type="chains" value="D/I=1-89"/>
</dbReference>
<dbReference type="PDB" id="3KPS">
    <property type="method" value="X-ray"/>
    <property type="resolution" value="2.70 A"/>
    <property type="chains" value="D=1-89"/>
</dbReference>
<dbReference type="PDB" id="3KXF">
    <property type="method" value="X-ray"/>
    <property type="resolution" value="3.10 A"/>
    <property type="chains" value="D/G/M/N=1-89"/>
</dbReference>
<dbReference type="PDB" id="3O4L">
    <property type="method" value="X-ray"/>
    <property type="resolution" value="2.54 A"/>
    <property type="chains" value="D=1-90"/>
</dbReference>
<dbReference type="PDB" id="3O6F">
    <property type="method" value="X-ray"/>
    <property type="resolution" value="2.80 A"/>
    <property type="chains" value="C/G=1-90"/>
</dbReference>
<dbReference type="PDB" id="3O8X">
    <property type="method" value="X-ray"/>
    <property type="resolution" value="2.74 A"/>
    <property type="chains" value="C=1-93"/>
</dbReference>
<dbReference type="PDB" id="3O9W">
    <property type="method" value="X-ray"/>
    <property type="resolution" value="2.80 A"/>
    <property type="chains" value="C=1-93"/>
</dbReference>
<dbReference type="PDB" id="3PWP">
    <property type="method" value="X-ray"/>
    <property type="resolution" value="2.69 A"/>
    <property type="chains" value="D=1-89"/>
</dbReference>
<dbReference type="PDB" id="3QDG">
    <property type="method" value="X-ray"/>
    <property type="resolution" value="2.69 A"/>
    <property type="chains" value="D=1-89"/>
</dbReference>
<dbReference type="PDB" id="3QDJ">
    <property type="method" value="X-ray"/>
    <property type="resolution" value="2.30 A"/>
    <property type="chains" value="D=1-89"/>
</dbReference>
<dbReference type="PDB" id="3QDM">
    <property type="method" value="X-ray"/>
    <property type="resolution" value="2.80 A"/>
    <property type="chains" value="D=1-87"/>
</dbReference>
<dbReference type="PDB" id="3QEQ">
    <property type="method" value="X-ray"/>
    <property type="resolution" value="2.59 A"/>
    <property type="chains" value="D=1-86"/>
</dbReference>
<dbReference type="PDB" id="3QEU">
    <property type="method" value="X-ray"/>
    <property type="resolution" value="2.09 A"/>
    <property type="chains" value="A/D=1-91"/>
</dbReference>
<dbReference type="PDB" id="3QIB">
    <property type="method" value="X-ray"/>
    <property type="resolution" value="2.70 A"/>
    <property type="chains" value="C=1-93"/>
</dbReference>
<dbReference type="PDB" id="3QJF">
    <property type="method" value="X-ray"/>
    <property type="resolution" value="2.40 A"/>
    <property type="chains" value="A/C=1-93"/>
</dbReference>
<dbReference type="PDB" id="3QUX">
    <property type="method" value="X-ray"/>
    <property type="resolution" value="2.91 A"/>
    <property type="chains" value="C=1-93"/>
</dbReference>
<dbReference type="PDB" id="3SCM">
    <property type="method" value="X-ray"/>
    <property type="resolution" value="2.50 A"/>
    <property type="chains" value="C=1-93"/>
</dbReference>
<dbReference type="PDB" id="3SDA">
    <property type="method" value="X-ray"/>
    <property type="resolution" value="2.80 A"/>
    <property type="chains" value="C=1-93"/>
</dbReference>
<dbReference type="PDB" id="3SDC">
    <property type="method" value="X-ray"/>
    <property type="resolution" value="3.10 A"/>
    <property type="chains" value="C=1-93"/>
</dbReference>
<dbReference type="PDB" id="3SDD">
    <property type="method" value="X-ray"/>
    <property type="resolution" value="3.00 A"/>
    <property type="chains" value="C=1-93"/>
</dbReference>
<dbReference type="PDB" id="3SDX">
    <property type="method" value="X-ray"/>
    <property type="resolution" value="3.12 A"/>
    <property type="chains" value="E/G=1-90"/>
</dbReference>
<dbReference type="PDB" id="3SJV">
    <property type="method" value="X-ray"/>
    <property type="resolution" value="3.10 A"/>
    <property type="chains" value="D/I/N/S=1-93"/>
</dbReference>
<dbReference type="PDB" id="3SKN">
    <property type="method" value="X-ray"/>
    <property type="resolution" value="2.90 A"/>
    <property type="chains" value="A/C/E/G=1-93"/>
</dbReference>
<dbReference type="PDB" id="3T0E">
    <property type="method" value="X-ray"/>
    <property type="resolution" value="4.00 A"/>
    <property type="chains" value="C=1-94"/>
</dbReference>
<dbReference type="PDB" id="3TN0">
    <property type="method" value="X-ray"/>
    <property type="resolution" value="3.20 A"/>
    <property type="chains" value="C=1-93"/>
</dbReference>
<dbReference type="PDB" id="3TVM">
    <property type="method" value="X-ray"/>
    <property type="resolution" value="2.80 A"/>
    <property type="chains" value="C/G=1-93"/>
</dbReference>
<dbReference type="PDB" id="4APQ">
    <property type="method" value="X-ray"/>
    <property type="resolution" value="3.00 A"/>
    <property type="chains" value="C=1-93"/>
</dbReference>
<dbReference type="PDB" id="4C56">
    <property type="method" value="X-ray"/>
    <property type="resolution" value="2.90 A"/>
    <property type="chains" value="A/G=1-93"/>
</dbReference>
<dbReference type="PDB" id="4G8E">
    <property type="method" value="X-ray"/>
    <property type="resolution" value="2.20 A"/>
    <property type="chains" value="A=1-90"/>
</dbReference>
<dbReference type="PDB" id="4G8F">
    <property type="method" value="X-ray"/>
    <property type="resolution" value="2.10 A"/>
    <property type="chains" value="A=1-93"/>
</dbReference>
<dbReference type="PDB" id="4IRS">
    <property type="method" value="X-ray"/>
    <property type="resolution" value="2.80 A"/>
    <property type="chains" value="C=1-93"/>
</dbReference>
<dbReference type="PDB" id="4JFD">
    <property type="method" value="X-ray"/>
    <property type="resolution" value="2.46 A"/>
    <property type="chains" value="D=1-86"/>
</dbReference>
<dbReference type="PDB" id="4JFE">
    <property type="method" value="X-ray"/>
    <property type="resolution" value="2.70 A"/>
    <property type="chains" value="D=1-87"/>
</dbReference>
<dbReference type="PDB" id="4JFF">
    <property type="method" value="X-ray"/>
    <property type="resolution" value="2.43 A"/>
    <property type="chains" value="D=1-87"/>
</dbReference>
<dbReference type="PDB" id="4JFH">
    <property type="method" value="X-ray"/>
    <property type="resolution" value="2.40 A"/>
    <property type="chains" value="D=1-90"/>
</dbReference>
<dbReference type="PDB" id="4JRX">
    <property type="method" value="X-ray"/>
    <property type="resolution" value="2.30 A"/>
    <property type="chains" value="D=1-89"/>
</dbReference>
<dbReference type="PDB" id="4JRY">
    <property type="method" value="X-ray"/>
    <property type="resolution" value="2.80 A"/>
    <property type="chains" value="D=1-89"/>
</dbReference>
<dbReference type="PDB" id="4MVB">
    <property type="method" value="X-ray"/>
    <property type="resolution" value="3.09 A"/>
    <property type="chains" value="A=1-93"/>
</dbReference>
<dbReference type="PDB" id="4MXQ">
    <property type="method" value="X-ray"/>
    <property type="resolution" value="2.60 A"/>
    <property type="chains" value="C=1-93"/>
</dbReference>
<dbReference type="PDB" id="4N0C">
    <property type="method" value="X-ray"/>
    <property type="resolution" value="2.90 A"/>
    <property type="chains" value="C/G=1-93"/>
</dbReference>
<dbReference type="PDB" id="4N5E">
    <property type="method" value="X-ray"/>
    <property type="resolution" value="3.06 A"/>
    <property type="chains" value="C=1-93"/>
</dbReference>
<dbReference type="PDB" id="4NHU">
    <property type="method" value="X-ray"/>
    <property type="resolution" value="2.90 A"/>
    <property type="chains" value="A/C=1-93"/>
</dbReference>
<dbReference type="PDB" id="4ONH">
    <property type="method" value="X-ray"/>
    <property type="resolution" value="3.01 A"/>
    <property type="chains" value="A=1-93"/>
</dbReference>
<dbReference type="PDB" id="4P4K">
    <property type="method" value="X-ray"/>
    <property type="resolution" value="2.80 A"/>
    <property type="chains" value="C/G=1-93"/>
</dbReference>
<dbReference type="PDB" id="4PRH">
    <property type="method" value="X-ray"/>
    <property type="resolution" value="2.50 A"/>
    <property type="chains" value="D=1-93"/>
</dbReference>
<dbReference type="PDB" id="4PRI">
    <property type="method" value="X-ray"/>
    <property type="resolution" value="2.40 A"/>
    <property type="chains" value="D=1-89"/>
</dbReference>
<dbReference type="PDB" id="4PRP">
    <property type="method" value="X-ray"/>
    <property type="resolution" value="2.50 A"/>
    <property type="chains" value="D=1-89"/>
</dbReference>
<dbReference type="PDB" id="4UDT">
    <property type="method" value="X-ray"/>
    <property type="resolution" value="1.35 A"/>
    <property type="chains" value="A=1-93"/>
</dbReference>
<dbReference type="PDB" id="4UDU">
    <property type="method" value="X-ray"/>
    <property type="resolution" value="2.50 A"/>
    <property type="chains" value="A=1-93"/>
</dbReference>
<dbReference type="PDB" id="4WW1">
    <property type="method" value="X-ray"/>
    <property type="resolution" value="1.38 A"/>
    <property type="chains" value="A=1-93"/>
</dbReference>
<dbReference type="PDB" id="4WW2">
    <property type="method" value="X-ray"/>
    <property type="resolution" value="2.48 A"/>
    <property type="chains" value="A=1-93"/>
</dbReference>
<dbReference type="PDB" id="4WWK">
    <property type="method" value="X-ray"/>
    <property type="resolution" value="3.10 A"/>
    <property type="chains" value="A=1-93"/>
</dbReference>
<dbReference type="PDB" id="4X6B">
    <property type="method" value="X-ray"/>
    <property type="resolution" value="2.10 A"/>
    <property type="chains" value="A/C=1-93"/>
</dbReference>
<dbReference type="PDB" id="4X6C">
    <property type="method" value="X-ray"/>
    <property type="resolution" value="2.80 A"/>
    <property type="chains" value="E/G=1-93"/>
</dbReference>
<dbReference type="PDB" id="4X6D">
    <property type="method" value="X-ray"/>
    <property type="resolution" value="2.98 A"/>
    <property type="chains" value="E/G=1-93"/>
</dbReference>
<dbReference type="PDB" id="4Y16">
    <property type="method" value="X-ray"/>
    <property type="resolution" value="2.60 A"/>
    <property type="chains" value="C=1-93"/>
</dbReference>
<dbReference type="PDB" id="4Y2D">
    <property type="method" value="X-ray"/>
    <property type="resolution" value="3.05 A"/>
    <property type="chains" value="C/G=1-93"/>
</dbReference>
<dbReference type="PDB" id="4Y4F">
    <property type="method" value="X-ray"/>
    <property type="resolution" value="3.19 A"/>
    <property type="chains" value="C/G=1-93"/>
</dbReference>
<dbReference type="PDB" id="4Y4H">
    <property type="method" value="X-ray"/>
    <property type="resolution" value="3.10 A"/>
    <property type="chains" value="C/G=1-93"/>
</dbReference>
<dbReference type="PDB" id="4Y4K">
    <property type="method" value="X-ray"/>
    <property type="resolution" value="2.90 A"/>
    <property type="chains" value="C=1-93"/>
</dbReference>
<dbReference type="PDB" id="4ZDH">
    <property type="method" value="X-ray"/>
    <property type="resolution" value="2.10 A"/>
    <property type="chains" value="A=1-91"/>
</dbReference>
<dbReference type="PDB" id="5BRZ">
    <property type="method" value="X-ray"/>
    <property type="resolution" value="2.62 A"/>
    <property type="chains" value="D=2-82"/>
</dbReference>
<dbReference type="PDB" id="5BS0">
    <property type="method" value="X-ray"/>
    <property type="resolution" value="2.40 A"/>
    <property type="chains" value="D=1-82"/>
</dbReference>
<dbReference type="PDB" id="5C07">
    <property type="method" value="X-ray"/>
    <property type="resolution" value="2.11 A"/>
    <property type="chains" value="D/I=1-88"/>
</dbReference>
<dbReference type="PDB" id="5C08">
    <property type="method" value="X-ray"/>
    <property type="resolution" value="2.33 A"/>
    <property type="chains" value="D/I=1-80"/>
</dbReference>
<dbReference type="PDB" id="5C09">
    <property type="method" value="X-ray"/>
    <property type="resolution" value="2.48 A"/>
    <property type="chains" value="D/I=1-90"/>
</dbReference>
<dbReference type="PDB" id="5C0A">
    <property type="method" value="X-ray"/>
    <property type="resolution" value="2.46 A"/>
    <property type="chains" value="D/I=1-87"/>
</dbReference>
<dbReference type="PDB" id="5C0B">
    <property type="method" value="X-ray"/>
    <property type="resolution" value="2.03 A"/>
    <property type="chains" value="D/I=1-89"/>
</dbReference>
<dbReference type="PDB" id="5C0C">
    <property type="method" value="X-ray"/>
    <property type="resolution" value="1.97 A"/>
    <property type="chains" value="D/I=1-89"/>
</dbReference>
<dbReference type="PDB" id="5EU6">
    <property type="method" value="X-ray"/>
    <property type="resolution" value="2.02 A"/>
    <property type="chains" value="D=1-87"/>
</dbReference>
<dbReference type="PDB" id="5FK9">
    <property type="method" value="X-ray"/>
    <property type="resolution" value="3.10 A"/>
    <property type="chains" value="A=1-93"/>
</dbReference>
<dbReference type="PDB" id="5FKA">
    <property type="method" value="X-ray"/>
    <property type="resolution" value="2.40 A"/>
    <property type="chains" value="A=1-93"/>
</dbReference>
<dbReference type="PDB" id="5HHM">
    <property type="method" value="X-ray"/>
    <property type="resolution" value="2.50 A"/>
    <property type="chains" value="D/I=1-89"/>
</dbReference>
<dbReference type="PDB" id="5HHO">
    <property type="method" value="X-ray"/>
    <property type="resolution" value="2.95 A"/>
    <property type="chains" value="D=1-89"/>
</dbReference>
<dbReference type="PDB" id="5HYJ">
    <property type="method" value="X-ray"/>
    <property type="resolution" value="3.06 A"/>
    <property type="chains" value="D/I=1-82"/>
</dbReference>
<dbReference type="PDB" id="5JZI">
    <property type="method" value="X-ray"/>
    <property type="resolution" value="2.50 A"/>
    <property type="chains" value="G/I=1-93"/>
</dbReference>
<dbReference type="PDB" id="5KS9">
    <property type="method" value="X-ray"/>
    <property type="resolution" value="2.55 A"/>
    <property type="chains" value="E/G=1-93"/>
</dbReference>
<dbReference type="PDB" id="5KSA">
    <property type="method" value="X-ray"/>
    <property type="resolution" value="2.00 A"/>
    <property type="chains" value="C=1-93"/>
</dbReference>
<dbReference type="PDB" id="5KSB">
    <property type="method" value="X-ray"/>
    <property type="resolution" value="2.90 A"/>
    <property type="chains" value="E/G=1-93"/>
</dbReference>
<dbReference type="PDB" id="5NQK">
    <property type="method" value="X-ray"/>
    <property type="resolution" value="3.25 A"/>
    <property type="chains" value="A=1-91"/>
</dbReference>
<dbReference type="PDB" id="6DKP">
    <property type="method" value="X-ray"/>
    <property type="resolution" value="2.97 A"/>
    <property type="chains" value="D=1-89"/>
</dbReference>
<dbReference type="PDB" id="6JXR">
    <property type="method" value="EM"/>
    <property type="resolution" value="3.70 A"/>
    <property type="chains" value="m=1-140"/>
</dbReference>
<dbReference type="PDB" id="7FJD">
    <property type="method" value="EM"/>
    <property type="resolution" value="3.20 A"/>
    <property type="chains" value="m=1-140"/>
</dbReference>
<dbReference type="PDB" id="7FJE">
    <property type="method" value="EM"/>
    <property type="resolution" value="3.00 A"/>
    <property type="chains" value="m=1-140"/>
</dbReference>
<dbReference type="PDB" id="7FJF">
    <property type="method" value="EM"/>
    <property type="resolution" value="3.10 A"/>
    <property type="chains" value="m=1-140"/>
</dbReference>
<dbReference type="PDB" id="7NDT">
    <property type="method" value="X-ray"/>
    <property type="resolution" value="3.00 A"/>
    <property type="chains" value="DDD/III=1-85"/>
</dbReference>
<dbReference type="PDB" id="7RYL">
    <property type="method" value="X-ray"/>
    <property type="resolution" value="2.00 A"/>
    <property type="chains" value="D=1-93"/>
</dbReference>
<dbReference type="PDB" id="7RYM">
    <property type="method" value="X-ray"/>
    <property type="resolution" value="3.20 A"/>
    <property type="chains" value="D=1-93"/>
</dbReference>
<dbReference type="PDB" id="7RYN">
    <property type="method" value="X-ray"/>
    <property type="resolution" value="2.70 A"/>
    <property type="chains" value="D=1-93"/>
</dbReference>
<dbReference type="PDB" id="7RYO">
    <property type="method" value="X-ray"/>
    <property type="resolution" value="3.00 A"/>
    <property type="chains" value="D=1-93"/>
</dbReference>
<dbReference type="PDB" id="7T2B">
    <property type="method" value="X-ray"/>
    <property type="resolution" value="2.80 A"/>
    <property type="chains" value="D/I/N/S=1-93"/>
</dbReference>
<dbReference type="PDB" id="7T2C">
    <property type="method" value="X-ray"/>
    <property type="resolution" value="3.10 A"/>
    <property type="chains" value="D=1-93"/>
</dbReference>
<dbReference type="PDB" id="7T2D">
    <property type="method" value="X-ray"/>
    <property type="resolution" value="3.40 A"/>
    <property type="chains" value="D/I/N/S=1-93"/>
</dbReference>
<dbReference type="PDB" id="8RRO">
    <property type="method" value="X-ray"/>
    <property type="resolution" value="3.50 A"/>
    <property type="chains" value="A/F/K/P/U/Z/e/j=1-90"/>
</dbReference>
<dbReference type="PDB" id="8TW4">
    <property type="method" value="EM"/>
    <property type="resolution" value="3.30 A"/>
    <property type="chains" value="A=1-140"/>
</dbReference>
<dbReference type="PDB" id="8Y6X">
    <property type="method" value="X-ray"/>
    <property type="resolution" value="3.40 A"/>
    <property type="chains" value="D=1-93"/>
</dbReference>
<dbReference type="PDB" id="8YIV">
    <property type="method" value="X-ray"/>
    <property type="resolution" value="2.10 A"/>
    <property type="chains" value="D=1-93"/>
</dbReference>
<dbReference type="PDB" id="8YJ2">
    <property type="method" value="X-ray"/>
    <property type="resolution" value="2.26 A"/>
    <property type="chains" value="D=1-93"/>
</dbReference>
<dbReference type="PDB" id="8YJ3">
    <property type="method" value="X-ray"/>
    <property type="resolution" value="3.50 A"/>
    <property type="chains" value="B/D/F/H=1-93"/>
</dbReference>
<dbReference type="PDB" id="9BBC">
    <property type="method" value="EM"/>
    <property type="resolution" value="3.30 A"/>
    <property type="chains" value="A=1-139"/>
</dbReference>
<dbReference type="PDB" id="9C3E">
    <property type="method" value="EM"/>
    <property type="resolution" value="3.50 A"/>
    <property type="chains" value="A=1-138"/>
</dbReference>
<dbReference type="PDBsum" id="1AO7"/>
<dbReference type="PDBsum" id="1BD2"/>
<dbReference type="PDBsum" id="1FYT"/>
<dbReference type="PDBsum" id="1J8H"/>
<dbReference type="PDBsum" id="1KGC"/>
<dbReference type="PDBsum" id="1MI5"/>
<dbReference type="PDBsum" id="1OGA"/>
<dbReference type="PDBsum" id="1QRN"/>
<dbReference type="PDBsum" id="1QSF"/>
<dbReference type="PDBsum" id="1YMM"/>
<dbReference type="PDBsum" id="1ZGL"/>
<dbReference type="PDBsum" id="2AK4"/>
<dbReference type="PDBsum" id="2BNQ"/>
<dbReference type="PDBsum" id="2BNR"/>
<dbReference type="PDBsum" id="2BNU"/>
<dbReference type="PDBsum" id="2CDF"/>
<dbReference type="PDBsum" id="2CDG"/>
<dbReference type="PDBsum" id="2ESV"/>
<dbReference type="PDBsum" id="2EYR"/>
<dbReference type="PDBsum" id="2EYS"/>
<dbReference type="PDBsum" id="2EYT"/>
<dbReference type="PDBsum" id="2F53"/>
<dbReference type="PDBsum" id="2F54"/>
<dbReference type="PDBsum" id="2GJ6"/>
<dbReference type="PDBsum" id="2IAL"/>
<dbReference type="PDBsum" id="2IAM"/>
<dbReference type="PDBsum" id="2IAN"/>
<dbReference type="PDBsum" id="2NX5"/>
<dbReference type="PDBsum" id="2P5E"/>
<dbReference type="PDBsum" id="2P5W"/>
<dbReference type="PDBsum" id="2PO6"/>
<dbReference type="PDBsum" id="2PYE"/>
<dbReference type="PDBsum" id="2PYF"/>
<dbReference type="PDBsum" id="2VLJ"/>
<dbReference type="PDBsum" id="2VLK"/>
<dbReference type="PDBsum" id="2VLM"/>
<dbReference type="PDBsum" id="2VLR"/>
<dbReference type="PDBsum" id="2XN9"/>
<dbReference type="PDBsum" id="2XNA"/>
<dbReference type="PDBsum" id="3ARB"/>
<dbReference type="PDBsum" id="3ARD"/>
<dbReference type="PDBsum" id="3ARE"/>
<dbReference type="PDBsum" id="3ARF"/>
<dbReference type="PDBsum" id="3ARG"/>
<dbReference type="PDBsum" id="3D39"/>
<dbReference type="PDBsum" id="3DX9"/>
<dbReference type="PDBsum" id="3DXA"/>
<dbReference type="PDBsum" id="3FFC"/>
<dbReference type="PDBsum" id="3GSN"/>
<dbReference type="PDBsum" id="3HE7"/>
<dbReference type="PDBsum" id="3HG1"/>
<dbReference type="PDBsum" id="3KPR"/>
<dbReference type="PDBsum" id="3KPS"/>
<dbReference type="PDBsum" id="3KXF"/>
<dbReference type="PDBsum" id="3O4L"/>
<dbReference type="PDBsum" id="3O6F"/>
<dbReference type="PDBsum" id="3O8X"/>
<dbReference type="PDBsum" id="3O9W"/>
<dbReference type="PDBsum" id="3PWP"/>
<dbReference type="PDBsum" id="3QDG"/>
<dbReference type="PDBsum" id="3QDJ"/>
<dbReference type="PDBsum" id="3QDM"/>
<dbReference type="PDBsum" id="3QEQ"/>
<dbReference type="PDBsum" id="3QEU"/>
<dbReference type="PDBsum" id="3QIB"/>
<dbReference type="PDBsum" id="3QJF"/>
<dbReference type="PDBsum" id="3QUX"/>
<dbReference type="PDBsum" id="3SCM"/>
<dbReference type="PDBsum" id="3SDA"/>
<dbReference type="PDBsum" id="3SDC"/>
<dbReference type="PDBsum" id="3SDD"/>
<dbReference type="PDBsum" id="3SDX"/>
<dbReference type="PDBsum" id="3SJV"/>
<dbReference type="PDBsum" id="3SKN"/>
<dbReference type="PDBsum" id="3T0E"/>
<dbReference type="PDBsum" id="3TN0"/>
<dbReference type="PDBsum" id="3TVM"/>
<dbReference type="PDBsum" id="4APQ"/>
<dbReference type="PDBsum" id="4C56"/>
<dbReference type="PDBsum" id="4G8E"/>
<dbReference type="PDBsum" id="4G8F"/>
<dbReference type="PDBsum" id="4IRS"/>
<dbReference type="PDBsum" id="4JFD"/>
<dbReference type="PDBsum" id="4JFE"/>
<dbReference type="PDBsum" id="4JFF"/>
<dbReference type="PDBsum" id="4JFH"/>
<dbReference type="PDBsum" id="4JRX"/>
<dbReference type="PDBsum" id="4JRY"/>
<dbReference type="PDBsum" id="4MVB"/>
<dbReference type="PDBsum" id="4MXQ"/>
<dbReference type="PDBsum" id="4N0C"/>
<dbReference type="PDBsum" id="4N5E"/>
<dbReference type="PDBsum" id="4NHU"/>
<dbReference type="PDBsum" id="4ONH"/>
<dbReference type="PDBsum" id="4P4K"/>
<dbReference type="PDBsum" id="4PRH"/>
<dbReference type="PDBsum" id="4PRI"/>
<dbReference type="PDBsum" id="4PRP"/>
<dbReference type="PDBsum" id="4UDT"/>
<dbReference type="PDBsum" id="4UDU"/>
<dbReference type="PDBsum" id="4WW1"/>
<dbReference type="PDBsum" id="4WW2"/>
<dbReference type="PDBsum" id="4WWK"/>
<dbReference type="PDBsum" id="4X6B"/>
<dbReference type="PDBsum" id="4X6C"/>
<dbReference type="PDBsum" id="4X6D"/>
<dbReference type="PDBsum" id="4Y16"/>
<dbReference type="PDBsum" id="4Y2D"/>
<dbReference type="PDBsum" id="4Y4F"/>
<dbReference type="PDBsum" id="4Y4H"/>
<dbReference type="PDBsum" id="4Y4K"/>
<dbReference type="PDBsum" id="4ZDH"/>
<dbReference type="PDBsum" id="5BRZ"/>
<dbReference type="PDBsum" id="5BS0"/>
<dbReference type="PDBsum" id="5C07"/>
<dbReference type="PDBsum" id="5C08"/>
<dbReference type="PDBsum" id="5C09"/>
<dbReference type="PDBsum" id="5C0A"/>
<dbReference type="PDBsum" id="5C0B"/>
<dbReference type="PDBsum" id="5C0C"/>
<dbReference type="PDBsum" id="5EU6"/>
<dbReference type="PDBsum" id="5FK9"/>
<dbReference type="PDBsum" id="5FKA"/>
<dbReference type="PDBsum" id="5HHM"/>
<dbReference type="PDBsum" id="5HHO"/>
<dbReference type="PDBsum" id="5HYJ"/>
<dbReference type="PDBsum" id="5JZI"/>
<dbReference type="PDBsum" id="5KS9"/>
<dbReference type="PDBsum" id="5KSA"/>
<dbReference type="PDBsum" id="5KSB"/>
<dbReference type="PDBsum" id="5NQK"/>
<dbReference type="PDBsum" id="6DKP"/>
<dbReference type="PDBsum" id="6JXR"/>
<dbReference type="PDBsum" id="7FJD"/>
<dbReference type="PDBsum" id="7FJE"/>
<dbReference type="PDBsum" id="7FJF"/>
<dbReference type="PDBsum" id="7NDT"/>
<dbReference type="PDBsum" id="7RYL"/>
<dbReference type="PDBsum" id="7RYM"/>
<dbReference type="PDBsum" id="7RYN"/>
<dbReference type="PDBsum" id="7RYO"/>
<dbReference type="PDBsum" id="7T2B"/>
<dbReference type="PDBsum" id="7T2C"/>
<dbReference type="PDBsum" id="7T2D"/>
<dbReference type="PDBsum" id="8RRO"/>
<dbReference type="PDBsum" id="8TW4"/>
<dbReference type="PDBsum" id="8Y6X"/>
<dbReference type="PDBsum" id="8YIV"/>
<dbReference type="PDBsum" id="8YJ2"/>
<dbReference type="PDBsum" id="8YJ3"/>
<dbReference type="PDBsum" id="9BBC"/>
<dbReference type="PDBsum" id="9C3E"/>
<dbReference type="EMDB" id="EMD-31618"/>
<dbReference type="EMDB" id="EMD-31619"/>
<dbReference type="EMDB" id="EMD-31620"/>
<dbReference type="EMDB" id="EMD-37929"/>
<dbReference type="EMDB" id="EMD-9895"/>
<dbReference type="SMR" id="P01848"/>
<dbReference type="ComplexPortal" id="CPX-6482">
    <property type="entry name" value="Alpha-beta T cell receptor complex, TRBC2 variant"/>
</dbReference>
<dbReference type="ComplexPortal" id="CPX-6581">
    <property type="entry name" value="Alpha-beta T cell receptor complex, TRBC1 variant"/>
</dbReference>
<dbReference type="FunCoup" id="P01848">
    <property type="interactions" value="180"/>
</dbReference>
<dbReference type="IntAct" id="P01848">
    <property type="interactions" value="13"/>
</dbReference>
<dbReference type="ChEMBL" id="CHEMBL3580506"/>
<dbReference type="DrugBank" id="DB02740">
    <property type="generic name" value="3-Indolebutyric Acid"/>
</dbReference>
<dbReference type="IMGT_GENE-DB" id="TRAC"/>
<dbReference type="GlyCosmos" id="P01848">
    <property type="glycosylation" value="4 sites, No reported glycans"/>
</dbReference>
<dbReference type="GlyGen" id="P01848">
    <property type="glycosylation" value="4 sites"/>
</dbReference>
<dbReference type="iPTMnet" id="P01848"/>
<dbReference type="PhosphoSitePlus" id="P01848"/>
<dbReference type="BioMuta" id="TRAC"/>
<dbReference type="DMDM" id="135511"/>
<dbReference type="MassIVE" id="P01848"/>
<dbReference type="ProteomicsDB" id="51491"/>
<dbReference type="UCSC" id="uc058zhj.1">
    <property type="organism name" value="human"/>
</dbReference>
<dbReference type="AGR" id="HGNC:12029"/>
<dbReference type="GeneCards" id="TRAC"/>
<dbReference type="HGNC" id="HGNC:12029">
    <property type="gene designation" value="TRAC"/>
</dbReference>
<dbReference type="HPA" id="ENSG00000277734">
    <property type="expression patterns" value="Tissue enriched (lymphoid)"/>
</dbReference>
<dbReference type="MalaCards" id="TRAC"/>
<dbReference type="MIM" id="186880">
    <property type="type" value="gene"/>
</dbReference>
<dbReference type="MIM" id="615387">
    <property type="type" value="phenotype"/>
</dbReference>
<dbReference type="neXtProt" id="NX_P01848"/>
<dbReference type="Orphanet" id="397959">
    <property type="disease" value="TCR-alpha-beta-positive T-cell deficiency"/>
</dbReference>
<dbReference type="HOGENOM" id="CLU_092098_1_0_1"/>
<dbReference type="InParanoid" id="P01848"/>
<dbReference type="OMA" id="CNATLIE"/>
<dbReference type="OrthoDB" id="8947657at2759"/>
<dbReference type="PAN-GO" id="P01848">
    <property type="GO annotations" value="1 GO annotation based on evolutionary models"/>
</dbReference>
<dbReference type="PhylomeDB" id="P01848"/>
<dbReference type="PathwayCommons" id="P01848"/>
<dbReference type="Reactome" id="R-HSA-198933">
    <property type="pathway name" value="Immunoregulatory interactions between a Lymphoid and a non-Lymphoid cell"/>
</dbReference>
<dbReference type="Reactome" id="R-HSA-202424">
    <property type="pathway name" value="Downstream TCR signaling"/>
</dbReference>
<dbReference type="Reactome" id="R-HSA-202427">
    <property type="pathway name" value="Phosphorylation of CD3 and TCR zeta chains"/>
</dbReference>
<dbReference type="Reactome" id="R-HSA-202430">
    <property type="pathway name" value="Translocation of ZAP-70 to Immunological synapse"/>
</dbReference>
<dbReference type="Reactome" id="R-HSA-202433">
    <property type="pathway name" value="Generation of second messenger molecules"/>
</dbReference>
<dbReference type="Reactome" id="R-HSA-389948">
    <property type="pathway name" value="Co-inhibition by PD-1"/>
</dbReference>
<dbReference type="SignaLink" id="P01848"/>
<dbReference type="SIGNOR" id="P01848"/>
<dbReference type="ChiTaRS" id="TRAC">
    <property type="organism name" value="human"/>
</dbReference>
<dbReference type="EvolutionaryTrace" id="P01848"/>
<dbReference type="Pharos" id="P01848">
    <property type="development level" value="Tdark"/>
</dbReference>
<dbReference type="PRO" id="PR:P01848"/>
<dbReference type="Proteomes" id="UP000005640">
    <property type="component" value="Unplaced"/>
</dbReference>
<dbReference type="RNAct" id="P01848">
    <property type="molecule type" value="protein"/>
</dbReference>
<dbReference type="GO" id="GO:0042105">
    <property type="term" value="C:alpha-beta T cell receptor complex"/>
    <property type="evidence" value="ECO:0000353"/>
    <property type="project" value="ComplexPortal"/>
</dbReference>
<dbReference type="GO" id="GO:0005886">
    <property type="term" value="C:plasma membrane"/>
    <property type="evidence" value="ECO:0000314"/>
    <property type="project" value="ComplexPortal"/>
</dbReference>
<dbReference type="GO" id="GO:0002250">
    <property type="term" value="P:adaptive immune response"/>
    <property type="evidence" value="ECO:0000303"/>
    <property type="project" value="ComplexPortal"/>
</dbReference>
<dbReference type="GO" id="GO:0046631">
    <property type="term" value="P:alpha-beta T cell activation"/>
    <property type="evidence" value="ECO:0000303"/>
    <property type="project" value="ComplexPortal"/>
</dbReference>
<dbReference type="GO" id="GO:0009617">
    <property type="term" value="P:response to bacterium"/>
    <property type="evidence" value="ECO:0000318"/>
    <property type="project" value="GO_Central"/>
</dbReference>
<dbReference type="GO" id="GO:0050852">
    <property type="term" value="P:T cell receptor signaling pathway"/>
    <property type="evidence" value="ECO:0000303"/>
    <property type="project" value="ComplexPortal"/>
</dbReference>
<dbReference type="CDD" id="cd07688">
    <property type="entry name" value="IgC_TCR_alpha"/>
    <property type="match status" value="1"/>
</dbReference>
<dbReference type="FunFam" id="2.60.40.10:FF:003018">
    <property type="entry name" value="T cell receptor alpha constant"/>
    <property type="match status" value="1"/>
</dbReference>
<dbReference type="Gene3D" id="2.60.40.10">
    <property type="entry name" value="Immunoglobulins"/>
    <property type="match status" value="1"/>
</dbReference>
<dbReference type="InterPro" id="IPR036179">
    <property type="entry name" value="Ig-like_dom_sf"/>
</dbReference>
<dbReference type="InterPro" id="IPR013783">
    <property type="entry name" value="Ig-like_fold"/>
</dbReference>
<dbReference type="InterPro" id="IPR015370">
    <property type="entry name" value="TCR_alpha_C"/>
</dbReference>
<dbReference type="Pfam" id="PF09291">
    <property type="entry name" value="DUF1968"/>
    <property type="match status" value="1"/>
</dbReference>
<dbReference type="SUPFAM" id="SSF48726">
    <property type="entry name" value="Immunoglobulin"/>
    <property type="match status" value="1"/>
</dbReference>
<gene>
    <name evidence="13" type="primary">TRAC</name>
    <name type="synonym">TCRA</name>
</gene>
<organism>
    <name type="scientific">Homo sapiens</name>
    <name type="common">Human</name>
    <dbReference type="NCBI Taxonomy" id="9606"/>
    <lineage>
        <taxon>Eukaryota</taxon>
        <taxon>Metazoa</taxon>
        <taxon>Chordata</taxon>
        <taxon>Craniata</taxon>
        <taxon>Vertebrata</taxon>
        <taxon>Euteleostomi</taxon>
        <taxon>Mammalia</taxon>
        <taxon>Eutheria</taxon>
        <taxon>Euarchontoglires</taxon>
        <taxon>Primates</taxon>
        <taxon>Haplorrhini</taxon>
        <taxon>Catarrhini</taxon>
        <taxon>Hominidae</taxon>
        <taxon>Homo</taxon>
    </lineage>
</organism>
<protein>
    <recommendedName>
        <fullName evidence="13">T cell receptor alpha chain constant</fullName>
    </recommendedName>
</protein>
<reference key="1">
    <citation type="journal article" date="1985" name="EMBO J.">
        <title>The chromosomal location of T-cell receptor genes and a T cell rearranging gene: possible correlation with specific translocations in human T cell leukaemia.</title>
        <authorList>
            <person name="Rabbitts T.H."/>
            <person name="Lefranc M.P."/>
            <person name="Stinson M.A."/>
            <person name="Sims J.E."/>
            <person name="Schroder J."/>
            <person name="Steinmetz M."/>
            <person name="Spurr N.L."/>
            <person name="Solomon E."/>
            <person name="Goodfellow P.N."/>
        </authorList>
    </citation>
    <scope>NUCLEOTIDE SEQUENCE [MRNA] (IMGT ALLELE TRAC*01)</scope>
</reference>
<reference key="2">
    <citation type="journal article" date="1985" name="Proc. Natl. Acad. Sci. U.S.A.">
        <title>Analysis of cDNA clones specific for human T cells and the alpha and beta chains of the T-cell receptor heterodimer from a human T-cell line.</title>
        <authorList>
            <person name="Yanagi Y."/>
            <person name="Chan A."/>
            <person name="Chin B."/>
            <person name="Minden M."/>
            <person name="Mak T.W."/>
        </authorList>
    </citation>
    <scope>NUCLEOTIDE SEQUENCE [MRNA] (IMGT ALLELE TRAC*01)</scope>
</reference>
<reference key="3">
    <citation type="journal article" date="2003" name="Nature">
        <title>The DNA sequence and analysis of human chromosome 14.</title>
        <authorList>
            <person name="Heilig R."/>
            <person name="Eckenberg R."/>
            <person name="Petit J.-L."/>
            <person name="Fonknechten N."/>
            <person name="Da Silva C."/>
            <person name="Cattolico L."/>
            <person name="Levy M."/>
            <person name="Barbe V."/>
            <person name="De Berardinis V."/>
            <person name="Ureta-Vidal A."/>
            <person name="Pelletier E."/>
            <person name="Vico V."/>
            <person name="Anthouard V."/>
            <person name="Rowen L."/>
            <person name="Madan A."/>
            <person name="Qin S."/>
            <person name="Sun H."/>
            <person name="Du H."/>
            <person name="Pepin K."/>
            <person name="Artiguenave F."/>
            <person name="Robert C."/>
            <person name="Cruaud C."/>
            <person name="Bruels T."/>
            <person name="Jaillon O."/>
            <person name="Friedlander L."/>
            <person name="Samson G."/>
            <person name="Brottier P."/>
            <person name="Cure S."/>
            <person name="Segurens B."/>
            <person name="Aniere F."/>
            <person name="Samain S."/>
            <person name="Crespeau H."/>
            <person name="Abbasi N."/>
            <person name="Aiach N."/>
            <person name="Boscus D."/>
            <person name="Dickhoff R."/>
            <person name="Dors M."/>
            <person name="Dubois I."/>
            <person name="Friedman C."/>
            <person name="Gouyvenoux M."/>
            <person name="James R."/>
            <person name="Madan A."/>
            <person name="Mairey-Estrada B."/>
            <person name="Mangenot S."/>
            <person name="Martins N."/>
            <person name="Menard M."/>
            <person name="Oztas S."/>
            <person name="Ratcliffe A."/>
            <person name="Shaffer T."/>
            <person name="Trask B."/>
            <person name="Vacherie B."/>
            <person name="Bellemere C."/>
            <person name="Belser C."/>
            <person name="Besnard-Gonnet M."/>
            <person name="Bartol-Mavel D."/>
            <person name="Boutard M."/>
            <person name="Briez-Silla S."/>
            <person name="Combette S."/>
            <person name="Dufosse-Laurent V."/>
            <person name="Ferron C."/>
            <person name="Lechaplais C."/>
            <person name="Louesse C."/>
            <person name="Muselet D."/>
            <person name="Magdelenat G."/>
            <person name="Pateau E."/>
            <person name="Petit E."/>
            <person name="Sirvain-Trukniewicz P."/>
            <person name="Trybou A."/>
            <person name="Vega-Czarny N."/>
            <person name="Bataille E."/>
            <person name="Bluet E."/>
            <person name="Bordelais I."/>
            <person name="Dubois M."/>
            <person name="Dumont C."/>
            <person name="Guerin T."/>
            <person name="Haffray S."/>
            <person name="Hammadi R."/>
            <person name="Muanga J."/>
            <person name="Pellouin V."/>
            <person name="Robert D."/>
            <person name="Wunderle E."/>
            <person name="Gauguet G."/>
            <person name="Roy A."/>
            <person name="Sainte-Marthe L."/>
            <person name="Verdier J."/>
            <person name="Verdier-Discala C."/>
            <person name="Hillier L.W."/>
            <person name="Fulton L."/>
            <person name="McPherson J."/>
            <person name="Matsuda F."/>
            <person name="Wilson R."/>
            <person name="Scarpelli C."/>
            <person name="Gyapay G."/>
            <person name="Wincker P."/>
            <person name="Saurin W."/>
            <person name="Quetier F."/>
            <person name="Waterston R."/>
            <person name="Hood L."/>
            <person name="Weissenbach J."/>
        </authorList>
    </citation>
    <scope>NUCLEOTIDE SEQUENCE [LARGE SCALE GENOMIC DNA] (IMGT ALLELE TRAC*01)</scope>
</reference>
<reference key="4">
    <citation type="book" date="2001" name="The T Cell Receptor FactsBook.">
        <title>The T Cell Receptor FactsBook.</title>
        <editorList>
            <person name="Lefranc M.P."/>
            <person name="Lefranc G."/>
        </editorList>
        <authorList>
            <person name="Lefranc M.P."/>
            <person name="Lefranc G."/>
        </authorList>
    </citation>
    <scope>NOMENCLATURE</scope>
</reference>
<reference key="5">
    <citation type="journal article" date="2004" name="Nat. Rev. Immunol.">
        <title>The many important facets of T-cell repertoire diversity.</title>
        <authorList>
            <person name="Nikolich-Zugich J."/>
            <person name="Slifka M.K."/>
            <person name="Messaoudi I."/>
        </authorList>
    </citation>
    <scope>REVIEW ON T CELL REPERTOIRE DIVERSITY</scope>
</reference>
<reference key="6">
    <citation type="journal article" date="2009" name="Nat. Biotechnol.">
        <title>Mass-spectrometric identification and relative quantification of N-linked cell surface glycoproteins.</title>
        <authorList>
            <person name="Wollscheid B."/>
            <person name="Bausch-Fluck D."/>
            <person name="Henderson C."/>
            <person name="O'Brien R."/>
            <person name="Bibel M."/>
            <person name="Schiess R."/>
            <person name="Aebersold R."/>
            <person name="Watts J.D."/>
        </authorList>
    </citation>
    <scope>GLYCOSYLATION [LARGE SCALE ANALYSIS] AT ASN-32 AND ASN-66</scope>
    <source>
        <tissue>Leukemic T-cell</tissue>
    </source>
</reference>
<reference key="7">
    <citation type="journal article" date="2010" name="Cold Spring Harb. Perspect. Biol.">
        <title>Structural biology of the T-cell receptor: insights into receptor assembly, ligand recognition, and initiation of signaling.</title>
        <authorList>
            <person name="Wucherpfennig K.W."/>
            <person name="Gagnon E."/>
            <person name="Call M.J."/>
            <person name="Huseby E.S."/>
            <person name="Call M.E."/>
        </authorList>
    </citation>
    <scope>REVIEW ON T CELL RECEPTOR-CD3 COMPLEX ASSEMBLY</scope>
    <scope>SUBCELLULAR LOCATION</scope>
</reference>
<reference key="8">
    <citation type="journal article" date="2013" name="Nat. Rev. Immunol.">
        <title>T cell receptor signalling networks: branched, diversified and bounded.</title>
        <authorList>
            <person name="Brownlie R.J."/>
            <person name="Zamoyska R."/>
        </authorList>
    </citation>
    <scope>REVIEW ON T CELL RECEPTOR SIGNALING</scope>
</reference>
<reference key="9">
    <citation type="journal article" date="2014" name="Front. Immunol.">
        <title>Immunoglobulin and T Cell Receptor Genes: IMGT((R)) and the Birth and Rise of Immunoinformatics.</title>
        <authorList>
            <person name="Lefranc M.P."/>
        </authorList>
    </citation>
    <scope>NOMENCLATURE</scope>
</reference>
<reference key="10">
    <citation type="journal article" date="2015" name="Annu. Rev. Immunol.">
        <title>T cell antigen receptor recognition of antigen-presenting molecules.</title>
        <authorList>
            <person name="Rossjohn J."/>
            <person name="Gras S."/>
            <person name="Miles J.J."/>
            <person name="Turner S.J."/>
            <person name="Godfrey D.I."/>
            <person name="McCluskey J."/>
        </authorList>
    </citation>
    <scope>REVIEW ON FUNCTION</scope>
</reference>
<reference key="11">
    <citation type="journal article" date="2016" name="Proc. Natl. Acad. Sci. U.S.A.">
        <title>A conserved alphabeta transmembrane interface forms the core of a compact T-cell receptor-CD3 structure within the membrane.</title>
        <authorList>
            <person name="Krshnan L."/>
            <person name="Park S."/>
            <person name="Im W."/>
            <person name="Call M.J."/>
            <person name="Call M.E."/>
        </authorList>
    </citation>
    <scope>DISULFIDE BOND</scope>
    <scope>SUBUNIT</scope>
    <scope>DOMAIN</scope>
    <scope>MUTAGENESIS OF ASN-130</scope>
</reference>
<reference key="12">
    <citation type="journal article" date="2011" name="J. Clin. Invest.">
        <title>Mutation in the TCRalpha subunit constant gene (TRAC) leads to a human immunodeficiency disorder characterized by a lack of TCRalphabeta+ T cells.</title>
        <authorList>
            <person name="Morgan N.V."/>
            <person name="Goddard S."/>
            <person name="Cardno T.S."/>
            <person name="McDonald D."/>
            <person name="Rahman F."/>
            <person name="Barge D."/>
            <person name="Ciupek A."/>
            <person name="Straatman-Iwanowska A."/>
            <person name="Pasha S."/>
            <person name="Guckian M."/>
            <person name="Anderson G."/>
            <person name="Huissoon A."/>
            <person name="Cant A."/>
            <person name="Tate W.P."/>
            <person name="Hambleton S."/>
            <person name="Maher E.R."/>
        </authorList>
    </citation>
    <scope>INVOLVEMENT IN IMD7</scope>
</reference>
<reference key="13">
    <citation type="journal article" date="2002" name="Structure">
        <title>The 1.5 A crystal structure of a highly selected antiviral T cell receptor provides evidence for a structural basis of immunodominance.</title>
        <authorList>
            <person name="Kjer-Nielsen L."/>
            <person name="Clements C.S."/>
            <person name="Brooks A.G."/>
            <person name="Purcell A.W."/>
            <person name="McCluskey J."/>
            <person name="Rossjohn J."/>
        </authorList>
    </citation>
    <scope>X-RAY CRYSTALLOGRAPHY (1.5 ANGSTROMS) OF 1-93</scope>
</reference>
<reference key="14">
    <citation type="journal article" date="2003" name="Nat. Immunol.">
        <title>A structural basis for immunodominant human T cell receptor recognition.</title>
        <authorList>
            <person name="Stewart-Jones G.B.E."/>
            <person name="McMichael A.J."/>
            <person name="Bell J.I."/>
            <person name="Stuart D.I."/>
            <person name="Jones E.Y."/>
        </authorList>
    </citation>
    <scope>X-RAY CRYSTALLOGRAPHY (1.4 ANGSTROMS) OF 1-91 IN COMPLEX WITH HLA-A/B2M HETERODIMER AND TRBC1</scope>
    <scope>DISULFIDE BOND</scope>
</reference>
<reference key="15">
    <citation type="journal article" date="2005" name="EMBO J.">
        <title>Structure of a human autoimmune TCR bound to a myelin basic protein self-peptide and a multiple sclerosis-associated MHC class II molecule.</title>
        <authorList>
            <person name="Li Y."/>
            <person name="Huang Y."/>
            <person name="Lue J."/>
            <person name="Quandt J.A."/>
            <person name="Martin R."/>
            <person name="Mariuzza R.A."/>
        </authorList>
    </citation>
    <scope>X-RAY CRYSTALLOGRAPHY (2.8 ANGSTROMS) OF 1-94 IN COMPLEX WITH HLA-DRA/HLA-DRB5 HETERODIMER AND MBP PEPTIDE</scope>
</reference>
<sequence>IQNPDPAVYQLRDSKSSDKSVCLFTDFDSQTNVSQSKDSDVYITDKTVLDMRSMDFKSNSAVAWSNKSDFACANAFNNSIIPEDTFFPSPESSCDVKLVEKSFETDTNLNFQNLSVIGFRILLLKVAGFNLLMTLRLWSS</sequence>